<protein>
    <recommendedName>
        <fullName>Uncharacterized protein R403</fullName>
    </recommendedName>
</protein>
<proteinExistence type="evidence at protein level"/>
<sequence>MNKGQNQVVPPMSQFGGQNPPQLSSIPPIVNPVVVQNRTSPGTPFITNKAKEIYNRRQQEEISSDSEEEESPIEPAKSKYSRDSRDSRDTRDSRKPKKDSRNMLGSLQKTGTEIAYEPAVKFEMILPKVVKPTRPETPLGIYEQYTPILPPVNNNRFNPAAFQHLFAPSSALLYGQSVKMPMQNVYNINLPGPTGGHVAMDKIYENILPGKNVKCGFSTLGERIQMLDYIRQILVSSCDGENISIDSSGGNSLLSYIKLMELNPNFYSTITNNPYKGLPYGLLIYRSCFPIRFEPTNQSVVCAKNSIGLNIRLYALSYAEYYSYKLNNNIYLEYDVWRELMYYEYVKNRIIKSKQSPNFPILYAYFFCPNRNINFFQLKTNCLTRKELLSEEYKKFRQIHEAISNTGTNKIIRPMSMSGQNDKCQLPDEVDPLFRLYSGTTLILITEAPHHNLYQWASRTYETDGIVQRMTSSGFYDEKIWYDILFQIISALYVMQIHGIYIRNMTIEDNVYIKDLKISGKSCGYWKWIIDGIPYYVPNYGYLVMIDSNFKDTRSESSLLDRDCCEREYKIYANNIYSQKYDSNVLNENIFENYRRIINTNAFTKEHTKNNVMRPPESIMRLIELMSNDPEKNLGTVLHKYFRKYLNNRIGTLLRRDTEIPNVRDVTRQFNNGEMAVEVIGDQMYKWCMVSKTNSDGTVEIITRSDSNLDDYIIKDVRIETLKQYSPYENIDQNLDQEVKLDDNPLETYTISSN</sequence>
<accession>Q5UQK5</accession>
<evidence type="ECO:0000256" key="1">
    <source>
        <dbReference type="SAM" id="MobiDB-lite"/>
    </source>
</evidence>
<evidence type="ECO:0000269" key="2">
    <source>
    </source>
</evidence>
<organism>
    <name type="scientific">Acanthamoeba polyphaga mimivirus</name>
    <name type="common">APMV</name>
    <dbReference type="NCBI Taxonomy" id="212035"/>
    <lineage>
        <taxon>Viruses</taxon>
        <taxon>Varidnaviria</taxon>
        <taxon>Bamfordvirae</taxon>
        <taxon>Nucleocytoviricota</taxon>
        <taxon>Megaviricetes</taxon>
        <taxon>Imitervirales</taxon>
        <taxon>Mimiviridae</taxon>
        <taxon>Megamimivirinae</taxon>
        <taxon>Mimivirus</taxon>
        <taxon>Mimivirus bradfordmassiliense</taxon>
    </lineage>
</organism>
<dbReference type="EMBL" id="AY653733">
    <property type="protein sequence ID" value="AAV50672.1"/>
    <property type="molecule type" value="Genomic_DNA"/>
</dbReference>
<dbReference type="KEGG" id="vg:9925024"/>
<dbReference type="OrthoDB" id="3146at10239"/>
<dbReference type="Proteomes" id="UP000001134">
    <property type="component" value="Genome"/>
</dbReference>
<dbReference type="GO" id="GO:0044423">
    <property type="term" value="C:virion component"/>
    <property type="evidence" value="ECO:0007669"/>
    <property type="project" value="UniProtKB-KW"/>
</dbReference>
<comment type="subcellular location">
    <subcellularLocation>
        <location evidence="2">Virion</location>
    </subcellularLocation>
</comment>
<feature type="chain" id="PRO_0000243966" description="Uncharacterized protein R403">
    <location>
        <begin position="1"/>
        <end position="754"/>
    </location>
</feature>
<feature type="region of interest" description="Disordered" evidence="1">
    <location>
        <begin position="1"/>
        <end position="110"/>
    </location>
</feature>
<feature type="compositionally biased region" description="Polar residues" evidence="1">
    <location>
        <begin position="15"/>
        <end position="25"/>
    </location>
</feature>
<feature type="compositionally biased region" description="Low complexity" evidence="1">
    <location>
        <begin position="26"/>
        <end position="35"/>
    </location>
</feature>
<feature type="compositionally biased region" description="Polar residues" evidence="1">
    <location>
        <begin position="36"/>
        <end position="46"/>
    </location>
</feature>
<feature type="compositionally biased region" description="Basic and acidic residues" evidence="1">
    <location>
        <begin position="49"/>
        <end position="60"/>
    </location>
</feature>
<feature type="compositionally biased region" description="Acidic residues" evidence="1">
    <location>
        <begin position="62"/>
        <end position="72"/>
    </location>
</feature>
<feature type="compositionally biased region" description="Basic and acidic residues" evidence="1">
    <location>
        <begin position="76"/>
        <end position="93"/>
    </location>
</feature>
<reference key="1">
    <citation type="journal article" date="2004" name="Science">
        <title>The 1.2-megabase genome sequence of Mimivirus.</title>
        <authorList>
            <person name="Raoult D."/>
            <person name="Audic S."/>
            <person name="Robert C."/>
            <person name="Abergel C."/>
            <person name="Renesto P."/>
            <person name="Ogata H."/>
            <person name="La Scola B."/>
            <person name="Susan M."/>
            <person name="Claverie J.-M."/>
        </authorList>
    </citation>
    <scope>NUCLEOTIDE SEQUENCE [LARGE SCALE GENOMIC DNA]</scope>
    <source>
        <strain>Rowbotham-Bradford</strain>
    </source>
</reference>
<reference key="2">
    <citation type="journal article" date="2006" name="J. Virol.">
        <title>Mimivirus giant particles incorporate a large fraction of anonymous and unique gene products.</title>
        <authorList>
            <person name="Renesto P."/>
            <person name="Abergel C."/>
            <person name="Decloquement P."/>
            <person name="Moinier D."/>
            <person name="Azza S."/>
            <person name="Ogata H."/>
            <person name="Fourquet P."/>
            <person name="Gorvel J.-P."/>
            <person name="Claverie J.-M."/>
            <person name="Raoult D."/>
        </authorList>
    </citation>
    <scope>IDENTIFICATION BY MASS SPECTROMETRY [LARGE SCALE ANALYSIS]</scope>
    <scope>SUBCELLULAR LOCATION</scope>
</reference>
<keyword id="KW-1185">Reference proteome</keyword>
<keyword id="KW-0946">Virion</keyword>
<gene>
    <name type="ordered locus">MIMI_R403</name>
</gene>
<name>YR403_MIMIV</name>
<organismHost>
    <name type="scientific">Acanthamoeba polyphaga</name>
    <name type="common">Amoeba</name>
    <dbReference type="NCBI Taxonomy" id="5757"/>
</organismHost>